<comment type="function">
    <text evidence="1">Encapsidates the negative strand viral RNA, protecting it from nucleases. The encapsidated genomic RNA is termed the ribonucleoprotein (RNP) and serves as template for transcription and replication. The RNP needs to be localized in the host nucleus to start an infectious cycle, but is too large to diffuse through the nuclear pore complex. NP comprises at least 2 nuclear localization signals that are responsible for the active RNP import into the nucleus through cellular importin alpha/beta pathway. Later in the infection, nclear export of RNPs are mediated through viral proteins NEP interacting with M1 which binds nucleoproteins. It is possible that nucleoprotein binds directly host exportin-1/XPO1 and plays an active role in RNPs nuclear export. M1 interaction with RNP seems to hide nucleoprotein's nuclear localization signals. Soon after a virion infects a new cell, M1 dissociates from the RNP under acidification of the virion driven by M2 protein. Dissociation of M1 from RNP unmasks nucleoprotein's nuclear localization signals, targeting the RNP to the nucleus.</text>
</comment>
<comment type="subunit">
    <text evidence="1">Homomultimerizes to form the nucleocapsid. May bind host exportin-1/XPO1. Binds to viral genomic RNA. Protein-RNA contacts are mediated by a combination of electrostatic interactions between positively charged residues and the phosphate backbone and planar interactions between aromatic side chains and bases.</text>
</comment>
<comment type="subcellular location">
    <subcellularLocation>
        <location evidence="1">Virion</location>
    </subcellularLocation>
    <subcellularLocation>
        <location evidence="1">Host nucleus</location>
    </subcellularLocation>
</comment>
<comment type="PTM">
    <text evidence="1">Late in virus-infected cells, may be cleaved from a 56-kDa protein to a 53-kDa protein by a cellular caspase. This cleavage might be a marker for the onset of apoptosis in infected cells or have a specific function in virus host interaction.</text>
</comment>
<comment type="similarity">
    <text evidence="1">Belongs to the influenza viruses nucleoprotein family.</text>
</comment>
<organism>
    <name type="scientific">Influenza B virus (strain B/Singapore/222/1979)</name>
    <dbReference type="NCBI Taxonomy" id="107417"/>
    <lineage>
        <taxon>Viruses</taxon>
        <taxon>Riboviria</taxon>
        <taxon>Orthornavirae</taxon>
        <taxon>Negarnaviricota</taxon>
        <taxon>Polyploviricotina</taxon>
        <taxon>Insthoviricetes</taxon>
        <taxon>Articulavirales</taxon>
        <taxon>Orthomyxoviridae</taxon>
        <taxon>Betainfluenzavirus</taxon>
        <taxon>Betainfluenzavirus influenzae</taxon>
        <taxon>Influenza B virus</taxon>
    </lineage>
</organism>
<keyword id="KW-0002">3D-structure</keyword>
<keyword id="KW-0167">Capsid protein</keyword>
<keyword id="KW-1139">Helical capsid protein</keyword>
<keyword id="KW-1048">Host nucleus</keyword>
<keyword id="KW-0945">Host-virus interaction</keyword>
<keyword id="KW-0687">Ribonucleoprotein</keyword>
<keyword id="KW-0694">RNA-binding</keyword>
<keyword id="KW-0543">Viral nucleoprotein</keyword>
<keyword id="KW-1163">Viral penetration into host nucleus</keyword>
<keyword id="KW-0946">Virion</keyword>
<keyword id="KW-1160">Virus entry into host cell</keyword>
<evidence type="ECO:0000255" key="1">
    <source>
        <dbReference type="HAMAP-Rule" id="MF_04070"/>
    </source>
</evidence>
<evidence type="ECO:0000256" key="2">
    <source>
        <dbReference type="SAM" id="MobiDB-lite"/>
    </source>
</evidence>
<organismHost>
    <name type="scientific">Homo sapiens</name>
    <name type="common">Human</name>
    <dbReference type="NCBI Taxonomy" id="9606"/>
</organismHost>
<accession>P04666</accession>
<proteinExistence type="evidence at protein level"/>
<dbReference type="EMBL" id="K01139">
    <property type="protein sequence ID" value="AAA43750.1"/>
    <property type="molecule type" value="Genomic_RNA"/>
</dbReference>
<dbReference type="PDB" id="7S8Q">
    <property type="method" value="X-ray"/>
    <property type="resolution" value="2.08 A"/>
    <property type="chains" value="C/F=511-520"/>
</dbReference>
<dbReference type="PDB" id="8TUH">
    <property type="method" value="X-ray"/>
    <property type="resolution" value="2.20 A"/>
    <property type="chains" value="F=30-38"/>
</dbReference>
<dbReference type="PDBsum" id="7S8Q"/>
<dbReference type="PDBsum" id="8TUH"/>
<dbReference type="SMR" id="P04666"/>
<dbReference type="GO" id="GO:0019029">
    <property type="term" value="C:helical viral capsid"/>
    <property type="evidence" value="ECO:0007669"/>
    <property type="project" value="UniProtKB-UniRule"/>
</dbReference>
<dbReference type="GO" id="GO:0043657">
    <property type="term" value="C:host cell"/>
    <property type="evidence" value="ECO:0007669"/>
    <property type="project" value="GOC"/>
</dbReference>
<dbReference type="GO" id="GO:0042025">
    <property type="term" value="C:host cell nucleus"/>
    <property type="evidence" value="ECO:0007669"/>
    <property type="project" value="UniProtKB-SubCell"/>
</dbReference>
<dbReference type="GO" id="GO:1990904">
    <property type="term" value="C:ribonucleoprotein complex"/>
    <property type="evidence" value="ECO:0007669"/>
    <property type="project" value="UniProtKB-KW"/>
</dbReference>
<dbReference type="GO" id="GO:0019013">
    <property type="term" value="C:viral nucleocapsid"/>
    <property type="evidence" value="ECO:0007669"/>
    <property type="project" value="UniProtKB-UniRule"/>
</dbReference>
<dbReference type="GO" id="GO:0003723">
    <property type="term" value="F:RNA binding"/>
    <property type="evidence" value="ECO:0007669"/>
    <property type="project" value="UniProtKB-UniRule"/>
</dbReference>
<dbReference type="GO" id="GO:0005198">
    <property type="term" value="F:structural molecule activity"/>
    <property type="evidence" value="ECO:0007669"/>
    <property type="project" value="UniProtKB-UniRule"/>
</dbReference>
<dbReference type="GO" id="GO:0046718">
    <property type="term" value="P:symbiont entry into host cell"/>
    <property type="evidence" value="ECO:0007669"/>
    <property type="project" value="UniProtKB-KW"/>
</dbReference>
<dbReference type="GO" id="GO:0075732">
    <property type="term" value="P:viral penetration into host nucleus"/>
    <property type="evidence" value="ECO:0007669"/>
    <property type="project" value="UniProtKB-UniRule"/>
</dbReference>
<dbReference type="HAMAP" id="MF_04070">
    <property type="entry name" value="INFV_NCAP"/>
    <property type="match status" value="1"/>
</dbReference>
<dbReference type="InterPro" id="IPR002141">
    <property type="entry name" value="Flu_NP"/>
</dbReference>
<dbReference type="Pfam" id="PF00506">
    <property type="entry name" value="Flu_NP"/>
    <property type="match status" value="1"/>
</dbReference>
<dbReference type="SUPFAM" id="SSF161003">
    <property type="entry name" value="flu NP-like"/>
    <property type="match status" value="1"/>
</dbReference>
<feature type="chain" id="PRO_0000079144" description="Nucleoprotein">
    <location>
        <begin position="1"/>
        <end position="560"/>
    </location>
</feature>
<feature type="region of interest" description="Disordered" evidence="2">
    <location>
        <begin position="1"/>
        <end position="73"/>
    </location>
</feature>
<sequence>MSNMDIDGINTGTIDKTPEEIISGTSGATRPIIRPATLAPPSNKRTRNPSPERATTSSEADVGRKTQKKQTPTEIKKSVYNMVVKLGEFYNQMMVKAGLNDDMERNLIQNAHAVERILLAATDDKKTEFQKKKNARDVKEGKEEIDHNKTGGTFYKMVRDDKTIYFSPIRITFLKEEVKTMYKTTMGSDGFSGLNHIMIGHSQMNDVCFQRSKALKRVGLDPSLISTFAGSTLPRRSGATGVAIKGGGTLVAEAIRFIGRAMADRGLLRDIKAKTAYEKILLNLKNKCSAPQQKALVDQVIGSRNPGIADIEDLTLLARSMVVVRPSVASKVVLPISIYAKIPQLGFNVEEYSMVGYEAMALYNMATPVSILRMGDDAKDKSQLFFMSCFGAAYEDLRVLSALTGTEFKPRSALKCKGFHVPAKEQVEGMGAALMSIKLQFWAPMTRSGGNEVGGDGGSGQISCSPVFAVERPIALSKQAVRRMLSMNIEGRDADVKGNLLKMMNDSMAKKTNGNAFIGKKMFQISDKNKTNPVEIPIKQTIPNFFFGRDTAEDYDDLDY</sequence>
<reference key="1">
    <citation type="journal article" date="1983" name="J. Virol.">
        <title>Complete nucleotide sequence of the nucleoprotein gene of influenza B virus.</title>
        <authorList>
            <person name="Londo D.R."/>
            <person name="Davis A.R."/>
            <person name="Nayak D.P."/>
        </authorList>
    </citation>
    <scope>NUCLEOTIDE SEQUENCE [GENOMIC RNA]</scope>
</reference>
<protein>
    <recommendedName>
        <fullName evidence="1">Nucleoprotein</fullName>
    </recommendedName>
    <alternativeName>
        <fullName evidence="1">Nucleocapsid protein</fullName>
        <shortName evidence="1">Protein N</shortName>
    </alternativeName>
</protein>
<name>NCAP_INBSI</name>
<gene>
    <name evidence="1" type="primary">NP</name>
</gene>